<dbReference type="EMBL" id="CP000859">
    <property type="protein sequence ID" value="ABW65817.1"/>
    <property type="molecule type" value="Genomic_DNA"/>
</dbReference>
<dbReference type="RefSeq" id="WP_012173436.1">
    <property type="nucleotide sequence ID" value="NC_009943.1"/>
</dbReference>
<dbReference type="SMR" id="A8ZRQ0"/>
<dbReference type="STRING" id="96561.Dole_0007"/>
<dbReference type="KEGG" id="dol:Dole_0007"/>
<dbReference type="eggNOG" id="COG0359">
    <property type="taxonomic scope" value="Bacteria"/>
</dbReference>
<dbReference type="HOGENOM" id="CLU_078938_3_0_7"/>
<dbReference type="OrthoDB" id="9788336at2"/>
<dbReference type="Proteomes" id="UP000008561">
    <property type="component" value="Chromosome"/>
</dbReference>
<dbReference type="GO" id="GO:1990904">
    <property type="term" value="C:ribonucleoprotein complex"/>
    <property type="evidence" value="ECO:0007669"/>
    <property type="project" value="UniProtKB-KW"/>
</dbReference>
<dbReference type="GO" id="GO:0005840">
    <property type="term" value="C:ribosome"/>
    <property type="evidence" value="ECO:0007669"/>
    <property type="project" value="UniProtKB-KW"/>
</dbReference>
<dbReference type="GO" id="GO:0019843">
    <property type="term" value="F:rRNA binding"/>
    <property type="evidence" value="ECO:0007669"/>
    <property type="project" value="UniProtKB-UniRule"/>
</dbReference>
<dbReference type="GO" id="GO:0003735">
    <property type="term" value="F:structural constituent of ribosome"/>
    <property type="evidence" value="ECO:0007669"/>
    <property type="project" value="InterPro"/>
</dbReference>
<dbReference type="GO" id="GO:0006412">
    <property type="term" value="P:translation"/>
    <property type="evidence" value="ECO:0007669"/>
    <property type="project" value="UniProtKB-UniRule"/>
</dbReference>
<dbReference type="Gene3D" id="3.10.430.100">
    <property type="entry name" value="Ribosomal protein L9, C-terminal domain"/>
    <property type="match status" value="1"/>
</dbReference>
<dbReference type="Gene3D" id="3.40.5.10">
    <property type="entry name" value="Ribosomal protein L9, N-terminal domain"/>
    <property type="match status" value="1"/>
</dbReference>
<dbReference type="HAMAP" id="MF_00503">
    <property type="entry name" value="Ribosomal_bL9"/>
    <property type="match status" value="1"/>
</dbReference>
<dbReference type="InterPro" id="IPR000244">
    <property type="entry name" value="Ribosomal_bL9"/>
</dbReference>
<dbReference type="InterPro" id="IPR009027">
    <property type="entry name" value="Ribosomal_bL9/RNase_H1_N"/>
</dbReference>
<dbReference type="InterPro" id="IPR020594">
    <property type="entry name" value="Ribosomal_bL9_bac/chp"/>
</dbReference>
<dbReference type="InterPro" id="IPR020069">
    <property type="entry name" value="Ribosomal_bL9_C"/>
</dbReference>
<dbReference type="InterPro" id="IPR036791">
    <property type="entry name" value="Ribosomal_bL9_C_sf"/>
</dbReference>
<dbReference type="InterPro" id="IPR020070">
    <property type="entry name" value="Ribosomal_bL9_N"/>
</dbReference>
<dbReference type="InterPro" id="IPR036935">
    <property type="entry name" value="Ribosomal_bL9_N_sf"/>
</dbReference>
<dbReference type="NCBIfam" id="TIGR00158">
    <property type="entry name" value="L9"/>
    <property type="match status" value="1"/>
</dbReference>
<dbReference type="PANTHER" id="PTHR21368">
    <property type="entry name" value="50S RIBOSOMAL PROTEIN L9"/>
    <property type="match status" value="1"/>
</dbReference>
<dbReference type="Pfam" id="PF03948">
    <property type="entry name" value="Ribosomal_L9_C"/>
    <property type="match status" value="1"/>
</dbReference>
<dbReference type="Pfam" id="PF01281">
    <property type="entry name" value="Ribosomal_L9_N"/>
    <property type="match status" value="1"/>
</dbReference>
<dbReference type="SUPFAM" id="SSF55658">
    <property type="entry name" value="L9 N-domain-like"/>
    <property type="match status" value="1"/>
</dbReference>
<dbReference type="SUPFAM" id="SSF55653">
    <property type="entry name" value="Ribosomal protein L9 C-domain"/>
    <property type="match status" value="1"/>
</dbReference>
<dbReference type="PROSITE" id="PS00651">
    <property type="entry name" value="RIBOSOMAL_L9"/>
    <property type="match status" value="1"/>
</dbReference>
<feature type="chain" id="PRO_1000126902" description="Large ribosomal subunit protein bL9">
    <location>
        <begin position="1"/>
        <end position="151"/>
    </location>
</feature>
<name>RL9_DESOH</name>
<comment type="function">
    <text evidence="1">Binds to the 23S rRNA.</text>
</comment>
<comment type="similarity">
    <text evidence="1">Belongs to the bacterial ribosomal protein bL9 family.</text>
</comment>
<gene>
    <name evidence="1" type="primary">rplI</name>
    <name type="ordered locus">Dole_0007</name>
</gene>
<accession>A8ZRQ0</accession>
<reference key="1">
    <citation type="submission" date="2007-10" db="EMBL/GenBank/DDBJ databases">
        <title>Complete sequence of Desulfococcus oleovorans Hxd3.</title>
        <authorList>
            <consortium name="US DOE Joint Genome Institute"/>
            <person name="Copeland A."/>
            <person name="Lucas S."/>
            <person name="Lapidus A."/>
            <person name="Barry K."/>
            <person name="Glavina del Rio T."/>
            <person name="Dalin E."/>
            <person name="Tice H."/>
            <person name="Pitluck S."/>
            <person name="Kiss H."/>
            <person name="Brettin T."/>
            <person name="Bruce D."/>
            <person name="Detter J.C."/>
            <person name="Han C."/>
            <person name="Schmutz J."/>
            <person name="Larimer F."/>
            <person name="Land M."/>
            <person name="Hauser L."/>
            <person name="Kyrpides N."/>
            <person name="Kim E."/>
            <person name="Wawrik B."/>
            <person name="Richardson P."/>
        </authorList>
    </citation>
    <scope>NUCLEOTIDE SEQUENCE [LARGE SCALE GENOMIC DNA]</scope>
    <source>
        <strain>DSM 6200 / JCM 39069 / Hxd3</strain>
    </source>
</reference>
<sequence length="151" mass="16578">MQVILMETVEALGLAGTEVKVAPGYARNFLFPRQKAMAATPANRRRMEQMRAKIELQIAKERGAAQEAAKKLEGVVCRISAKVSNEGRLYGSVTVGDIVEALAARDITVSKKMVLLRENIKEVGTYPVGIYLYKDVVPEISVEIVADEKAE</sequence>
<organism>
    <name type="scientific">Desulfosudis oleivorans (strain DSM 6200 / JCM 39069 / Hxd3)</name>
    <name type="common">Desulfococcus oleovorans</name>
    <dbReference type="NCBI Taxonomy" id="96561"/>
    <lineage>
        <taxon>Bacteria</taxon>
        <taxon>Pseudomonadati</taxon>
        <taxon>Thermodesulfobacteriota</taxon>
        <taxon>Desulfobacteria</taxon>
        <taxon>Desulfobacterales</taxon>
        <taxon>Desulfosudaceae</taxon>
        <taxon>Desulfosudis</taxon>
    </lineage>
</organism>
<proteinExistence type="inferred from homology"/>
<keyword id="KW-1185">Reference proteome</keyword>
<keyword id="KW-0687">Ribonucleoprotein</keyword>
<keyword id="KW-0689">Ribosomal protein</keyword>
<keyword id="KW-0694">RNA-binding</keyword>
<keyword id="KW-0699">rRNA-binding</keyword>
<evidence type="ECO:0000255" key="1">
    <source>
        <dbReference type="HAMAP-Rule" id="MF_00503"/>
    </source>
</evidence>
<evidence type="ECO:0000305" key="2"/>
<protein>
    <recommendedName>
        <fullName evidence="1">Large ribosomal subunit protein bL9</fullName>
    </recommendedName>
    <alternativeName>
        <fullName evidence="2">50S ribosomal protein L9</fullName>
    </alternativeName>
</protein>